<proteinExistence type="evidence at transcript level"/>
<sequence>MPSRLRKTRKLRGHVSHGHGRIGKHRKHPGGRGNAGGLHHHRINFDKYHPGYFGKVGMKHYHLKRNQSFCPTVNLDKLWTLVSEQTRVNAAKNKTGAAPIIDVVRSGYYKVLGKGKLPKQPVIVKAKFFSRRAEEKIKSVGGACVLVA</sequence>
<keyword id="KW-0007">Acetylation</keyword>
<keyword id="KW-0963">Cytoplasm</keyword>
<keyword id="KW-0379">Hydroxylation</keyword>
<keyword id="KW-0597">Phosphoprotein</keyword>
<keyword id="KW-1185">Reference proteome</keyword>
<keyword id="KW-0687">Ribonucleoprotein</keyword>
<keyword id="KW-0689">Ribosomal protein</keyword>
<gene>
    <name type="primary">RPL27A</name>
</gene>
<reference key="1">
    <citation type="submission" date="2004-11" db="EMBL/GenBank/DDBJ databases">
        <authorList>
            <consortium name="The German cDNA consortium"/>
        </authorList>
    </citation>
    <scope>NUCLEOTIDE SEQUENCE [LARGE SCALE MRNA]</scope>
    <source>
        <tissue>Heart</tissue>
    </source>
</reference>
<organism>
    <name type="scientific">Pongo abelii</name>
    <name type="common">Sumatran orangutan</name>
    <name type="synonym">Pongo pygmaeus abelii</name>
    <dbReference type="NCBI Taxonomy" id="9601"/>
    <lineage>
        <taxon>Eukaryota</taxon>
        <taxon>Metazoa</taxon>
        <taxon>Chordata</taxon>
        <taxon>Craniata</taxon>
        <taxon>Vertebrata</taxon>
        <taxon>Euteleostomi</taxon>
        <taxon>Mammalia</taxon>
        <taxon>Eutheria</taxon>
        <taxon>Euarchontoglires</taxon>
        <taxon>Primates</taxon>
        <taxon>Haplorrhini</taxon>
        <taxon>Catarrhini</taxon>
        <taxon>Hominidae</taxon>
        <taxon>Pongo</taxon>
    </lineage>
</organism>
<name>RL27A_PONAB</name>
<evidence type="ECO:0000250" key="1">
    <source>
        <dbReference type="UniProtKB" id="P46776"/>
    </source>
</evidence>
<evidence type="ECO:0000256" key="2">
    <source>
        <dbReference type="SAM" id="MobiDB-lite"/>
    </source>
</evidence>
<evidence type="ECO:0000305" key="3"/>
<feature type="chain" id="PRO_0000104883" description="Large ribosomal subunit protein uL15">
    <location>
        <begin position="1"/>
        <end position="148"/>
    </location>
</feature>
<feature type="region of interest" description="Disordered" evidence="2">
    <location>
        <begin position="1"/>
        <end position="38"/>
    </location>
</feature>
<feature type="compositionally biased region" description="Basic residues" evidence="2">
    <location>
        <begin position="1"/>
        <end position="30"/>
    </location>
</feature>
<feature type="modified residue" description="(3S)-3-hydroxyhistidine" evidence="1">
    <location>
        <position position="39"/>
    </location>
</feature>
<feature type="modified residue" description="N6-acetyllysine" evidence="1">
    <location>
        <position position="47"/>
    </location>
</feature>
<feature type="modified residue" description="N6-acetyllysine" evidence="1">
    <location>
        <position position="55"/>
    </location>
</feature>
<feature type="modified residue" description="Phosphoserine" evidence="1">
    <location>
        <position position="68"/>
    </location>
</feature>
<feature type="modified residue" description="N6-acetyllysine" evidence="1">
    <location>
        <position position="110"/>
    </location>
</feature>
<accession>Q5REY2</accession>
<protein>
    <recommendedName>
        <fullName evidence="3">Large ribosomal subunit protein uL15</fullName>
    </recommendedName>
    <alternativeName>
        <fullName>60S ribosomal protein L27a</fullName>
    </alternativeName>
</protein>
<dbReference type="EMBL" id="CR857381">
    <property type="protein sequence ID" value="CAH89675.1"/>
    <property type="molecule type" value="mRNA"/>
</dbReference>
<dbReference type="RefSeq" id="NP_001124757.1">
    <property type="nucleotide sequence ID" value="NM_001131285.2"/>
</dbReference>
<dbReference type="RefSeq" id="XP_054379963.1">
    <property type="nucleotide sequence ID" value="XM_054523988.2"/>
</dbReference>
<dbReference type="RefSeq" id="XP_054379964.1">
    <property type="nucleotide sequence ID" value="XM_054523989.2"/>
</dbReference>
<dbReference type="SMR" id="Q5REY2"/>
<dbReference type="FunCoup" id="Q5REY2">
    <property type="interactions" value="2091"/>
</dbReference>
<dbReference type="IntAct" id="Q5REY2">
    <property type="interactions" value="1"/>
</dbReference>
<dbReference type="MINT" id="Q5REY2"/>
<dbReference type="STRING" id="9601.ENSPPYP00000017756"/>
<dbReference type="Ensembl" id="ENSPPYT00000033876.2">
    <property type="protein sequence ID" value="ENSPPYP00000024613.2"/>
    <property type="gene ID" value="ENSPPYG00000029639.2"/>
</dbReference>
<dbReference type="GeneID" id="100936083"/>
<dbReference type="KEGG" id="pon:100936083"/>
<dbReference type="CTD" id="6157"/>
<dbReference type="eggNOG" id="KOG1742">
    <property type="taxonomic scope" value="Eukaryota"/>
</dbReference>
<dbReference type="GeneTree" id="ENSGT00390000005534"/>
<dbReference type="InParanoid" id="Q5REY2"/>
<dbReference type="OMA" id="HYARNKY"/>
<dbReference type="OrthoDB" id="61900at2759"/>
<dbReference type="Proteomes" id="UP000001595">
    <property type="component" value="Chromosome 11"/>
</dbReference>
<dbReference type="GO" id="GO:0022625">
    <property type="term" value="C:cytosolic large ribosomal subunit"/>
    <property type="evidence" value="ECO:0007669"/>
    <property type="project" value="TreeGrafter"/>
</dbReference>
<dbReference type="GO" id="GO:0003735">
    <property type="term" value="F:structural constituent of ribosome"/>
    <property type="evidence" value="ECO:0007669"/>
    <property type="project" value="InterPro"/>
</dbReference>
<dbReference type="GO" id="GO:0006412">
    <property type="term" value="P:translation"/>
    <property type="evidence" value="ECO:0007669"/>
    <property type="project" value="InterPro"/>
</dbReference>
<dbReference type="FunFam" id="3.100.10.10:FF:000024">
    <property type="entry name" value="RPL27A isoform 10"/>
    <property type="match status" value="1"/>
</dbReference>
<dbReference type="Gene3D" id="3.100.10.10">
    <property type="match status" value="1"/>
</dbReference>
<dbReference type="Gene3D" id="4.10.990.10">
    <property type="match status" value="1"/>
</dbReference>
<dbReference type="HAMAP" id="MF_01341">
    <property type="entry name" value="Ribosomal_uL15"/>
    <property type="match status" value="1"/>
</dbReference>
<dbReference type="InterPro" id="IPR027386">
    <property type="entry name" value="Rbsml_uL15_N"/>
</dbReference>
<dbReference type="InterPro" id="IPR030878">
    <property type="entry name" value="Ribosomal_uL15"/>
</dbReference>
<dbReference type="InterPro" id="IPR021131">
    <property type="entry name" value="Ribosomal_uL15/eL18"/>
</dbReference>
<dbReference type="InterPro" id="IPR036227">
    <property type="entry name" value="Ribosomal_uL15/eL18_sf"/>
</dbReference>
<dbReference type="InterPro" id="IPR001196">
    <property type="entry name" value="Ribosomal_uL15_CS"/>
</dbReference>
<dbReference type="PANTHER" id="PTHR11721">
    <property type="entry name" value="60S RIBOSOMAL PROTEIN L27A"/>
    <property type="match status" value="1"/>
</dbReference>
<dbReference type="PANTHER" id="PTHR11721:SF27">
    <property type="entry name" value="LARGE RIBOSOMAL SUBUNIT PROTEIN UL15"/>
    <property type="match status" value="1"/>
</dbReference>
<dbReference type="Pfam" id="PF00828">
    <property type="entry name" value="Ribosomal_L27A"/>
    <property type="match status" value="1"/>
</dbReference>
<dbReference type="SUPFAM" id="SSF52080">
    <property type="entry name" value="Ribosomal proteins L15p and L18e"/>
    <property type="match status" value="1"/>
</dbReference>
<dbReference type="PROSITE" id="PS00475">
    <property type="entry name" value="RIBOSOMAL_L15"/>
    <property type="match status" value="1"/>
</dbReference>
<comment type="function">
    <text evidence="1">Component of the large ribosomal subunit. The ribosome is a large ribonucleoprotein complex responsible for the synthesis of proteins in the cell.</text>
</comment>
<comment type="subunit">
    <text evidence="1">Component of the large ribosomal subunit.</text>
</comment>
<comment type="subcellular location">
    <subcellularLocation>
        <location evidence="1">Cytoplasm</location>
    </subcellularLocation>
</comment>
<comment type="PTM">
    <text evidence="1">Hydroxylated on His-39 by MINA.</text>
</comment>
<comment type="similarity">
    <text evidence="3">Belongs to the universal ribosomal protein uL15 family.</text>
</comment>